<accession>Q0TLS7</accession>
<keyword id="KW-0054">Arabinose catabolism</keyword>
<keyword id="KW-0067">ATP-binding</keyword>
<keyword id="KW-0119">Carbohydrate metabolism</keyword>
<keyword id="KW-0418">Kinase</keyword>
<keyword id="KW-0547">Nucleotide-binding</keyword>
<keyword id="KW-0808">Transferase</keyword>
<reference key="1">
    <citation type="journal article" date="2006" name="Mol. Microbiol.">
        <title>Role of pathogenicity island-associated integrases in the genome plasticity of uropathogenic Escherichia coli strain 536.</title>
        <authorList>
            <person name="Hochhut B."/>
            <person name="Wilde C."/>
            <person name="Balling G."/>
            <person name="Middendorf B."/>
            <person name="Dobrindt U."/>
            <person name="Brzuszkiewicz E."/>
            <person name="Gottschalk G."/>
            <person name="Carniel E."/>
            <person name="Hacker J."/>
        </authorList>
    </citation>
    <scope>NUCLEOTIDE SEQUENCE [LARGE SCALE GENOMIC DNA]</scope>
    <source>
        <strain>536 / UPEC</strain>
    </source>
</reference>
<gene>
    <name evidence="1" type="primary">araB</name>
    <name type="ordered locus">ECP_0064</name>
</gene>
<organism>
    <name type="scientific">Escherichia coli O6:K15:H31 (strain 536 / UPEC)</name>
    <dbReference type="NCBI Taxonomy" id="362663"/>
    <lineage>
        <taxon>Bacteria</taxon>
        <taxon>Pseudomonadati</taxon>
        <taxon>Pseudomonadota</taxon>
        <taxon>Gammaproteobacteria</taxon>
        <taxon>Enterobacterales</taxon>
        <taxon>Enterobacteriaceae</taxon>
        <taxon>Escherichia</taxon>
    </lineage>
</organism>
<proteinExistence type="inferred from homology"/>
<protein>
    <recommendedName>
        <fullName evidence="1">Ribulokinase</fullName>
        <ecNumber evidence="1">2.7.1.16</ecNumber>
    </recommendedName>
</protein>
<feature type="chain" id="PRO_0000263401" description="Ribulokinase">
    <location>
        <begin position="1"/>
        <end position="566"/>
    </location>
</feature>
<comment type="catalytic activity">
    <reaction evidence="1">
        <text>D-ribulose + ATP = D-ribulose 5-phosphate + ADP + H(+)</text>
        <dbReference type="Rhea" id="RHEA:17601"/>
        <dbReference type="ChEBI" id="CHEBI:15378"/>
        <dbReference type="ChEBI" id="CHEBI:17173"/>
        <dbReference type="ChEBI" id="CHEBI:30616"/>
        <dbReference type="ChEBI" id="CHEBI:58121"/>
        <dbReference type="ChEBI" id="CHEBI:456216"/>
        <dbReference type="EC" id="2.7.1.16"/>
    </reaction>
</comment>
<comment type="catalytic activity">
    <reaction evidence="1">
        <text>L-ribulose + ATP = L-ribulose 5-phosphate + ADP + H(+)</text>
        <dbReference type="Rhea" id="RHEA:22072"/>
        <dbReference type="ChEBI" id="CHEBI:15378"/>
        <dbReference type="ChEBI" id="CHEBI:16880"/>
        <dbReference type="ChEBI" id="CHEBI:30616"/>
        <dbReference type="ChEBI" id="CHEBI:58226"/>
        <dbReference type="ChEBI" id="CHEBI:456216"/>
        <dbReference type="EC" id="2.7.1.16"/>
    </reaction>
</comment>
<comment type="pathway">
    <text evidence="1">Carbohydrate degradation; L-arabinose degradation via L-ribulose; D-xylulose 5-phosphate from L-arabinose (bacterial route): step 2/3.</text>
</comment>
<comment type="similarity">
    <text evidence="1">Belongs to the ribulokinase family.</text>
</comment>
<evidence type="ECO:0000255" key="1">
    <source>
        <dbReference type="HAMAP-Rule" id="MF_00520"/>
    </source>
</evidence>
<sequence length="566" mass="61112">MAIAIGLDFGSDSVRALAVDCATGEEIATSVEWYPRWQNGQFCDAPNNQFRHHPRDYIESMEAALKTVLAELSVEQHAAVVGIGVDTTGSTPAPIDADGNVLALRPEFAENPNAMFVLWKDHTAVEEAEEITRLCHTPGNVDYSRYIGGIYSSEWFWAKILHVTRQDSAVAQSAASWIELCDWVPALLSGTTRPQDIRRGRCSAGHKSLWHESWGGLPPASFFDELDPILNRHLPSPLFTDTWTADIPVGTLCPEWAQRLGLPESVVISGGAFDCHMGAVGAGAQPNALVKVIGTSTCDILIADKQSVGERAVKGICGQVDGSVVPGFIGLEAGQSAFGDIYAWFGRVLGWPLEQLAAQHPELKDQINASQKQLLPALTEAWAKNPSLDHLPVVLDWFNGRRTPNANQRLKGVITDLNLATDAPLLFGGLIAATAFGARAIMECFTDQGIAVNNVMALGGIARKNQVIMQACCDVLNRPLQIVASDQCCALGAAIFAAVAAKAHADIPSAQQKMASAVEKTLQPCSEQAQRFEQLYRRYQQWAMSAEKHYLPTSAPAQAAQAVPTL</sequence>
<dbReference type="EC" id="2.7.1.16" evidence="1"/>
<dbReference type="EMBL" id="CP000247">
    <property type="protein sequence ID" value="ABG68104.1"/>
    <property type="molecule type" value="Genomic_DNA"/>
</dbReference>
<dbReference type="RefSeq" id="WP_000951858.1">
    <property type="nucleotide sequence ID" value="NC_008253.1"/>
</dbReference>
<dbReference type="SMR" id="Q0TLS7"/>
<dbReference type="KEGG" id="ecp:ECP_0064"/>
<dbReference type="HOGENOM" id="CLU_009281_9_1_6"/>
<dbReference type="UniPathway" id="UPA00145">
    <property type="reaction ID" value="UER00566"/>
</dbReference>
<dbReference type="Proteomes" id="UP000009182">
    <property type="component" value="Chromosome"/>
</dbReference>
<dbReference type="GO" id="GO:0005737">
    <property type="term" value="C:cytoplasm"/>
    <property type="evidence" value="ECO:0007669"/>
    <property type="project" value="TreeGrafter"/>
</dbReference>
<dbReference type="GO" id="GO:0005524">
    <property type="term" value="F:ATP binding"/>
    <property type="evidence" value="ECO:0007669"/>
    <property type="project" value="UniProtKB-KW"/>
</dbReference>
<dbReference type="GO" id="GO:0019150">
    <property type="term" value="F:D-ribulokinase activity"/>
    <property type="evidence" value="ECO:0007669"/>
    <property type="project" value="RHEA"/>
</dbReference>
<dbReference type="GO" id="GO:0008741">
    <property type="term" value="F:ribulokinase activity"/>
    <property type="evidence" value="ECO:0007669"/>
    <property type="project" value="UniProtKB-UniRule"/>
</dbReference>
<dbReference type="GO" id="GO:0019569">
    <property type="term" value="P:L-arabinose catabolic process to xylulose 5-phosphate"/>
    <property type="evidence" value="ECO:0007669"/>
    <property type="project" value="UniProtKB-UniRule"/>
</dbReference>
<dbReference type="CDD" id="cd07781">
    <property type="entry name" value="ASKHA_NBD_FGGY_L-RBK"/>
    <property type="match status" value="1"/>
</dbReference>
<dbReference type="Gene3D" id="1.20.58.2240">
    <property type="match status" value="1"/>
</dbReference>
<dbReference type="Gene3D" id="3.30.420.40">
    <property type="match status" value="1"/>
</dbReference>
<dbReference type="HAMAP" id="MF_00520">
    <property type="entry name" value="Ribulokinase"/>
    <property type="match status" value="1"/>
</dbReference>
<dbReference type="InterPro" id="IPR043129">
    <property type="entry name" value="ATPase_NBD"/>
</dbReference>
<dbReference type="InterPro" id="IPR018485">
    <property type="entry name" value="FGGY_C"/>
</dbReference>
<dbReference type="InterPro" id="IPR005929">
    <property type="entry name" value="Ribulokinase"/>
</dbReference>
<dbReference type="NCBIfam" id="TIGR01234">
    <property type="entry name" value="L-ribulokinase"/>
    <property type="match status" value="1"/>
</dbReference>
<dbReference type="NCBIfam" id="NF003154">
    <property type="entry name" value="PRK04123.1"/>
    <property type="match status" value="1"/>
</dbReference>
<dbReference type="PANTHER" id="PTHR43435:SF4">
    <property type="entry name" value="FGGY CARBOHYDRATE KINASE DOMAIN-CONTAINING PROTEIN"/>
    <property type="match status" value="1"/>
</dbReference>
<dbReference type="PANTHER" id="PTHR43435">
    <property type="entry name" value="RIBULOKINASE"/>
    <property type="match status" value="1"/>
</dbReference>
<dbReference type="Pfam" id="PF02782">
    <property type="entry name" value="FGGY_C"/>
    <property type="match status" value="1"/>
</dbReference>
<dbReference type="SUPFAM" id="SSF53067">
    <property type="entry name" value="Actin-like ATPase domain"/>
    <property type="match status" value="2"/>
</dbReference>
<name>ARAB_ECOL5</name>